<protein>
    <recommendedName>
        <fullName evidence="1">Methionine aminopeptidase 2-2</fullName>
        <shortName evidence="1">MAP 2-2</shortName>
        <shortName evidence="1">MetAP 2-2</shortName>
        <ecNumber evidence="1">3.4.11.18</ecNumber>
    </recommendedName>
    <alternativeName>
        <fullName evidence="1">Peptidase M</fullName>
    </alternativeName>
</protein>
<comment type="function">
    <text evidence="1">Cotranslationally removes the N-terminal methionine from nascent proteins. The N-terminal methionine is often cleaved when the second residue in the primary sequence is small and uncharged (Met-Ala-, Cys, Gly, Pro, Ser, Thr, or Val).</text>
</comment>
<comment type="catalytic activity">
    <reaction evidence="1">
        <text>Release of N-terminal amino acids, preferentially methionine, from peptides and arylamides.</text>
        <dbReference type="EC" id="3.4.11.18"/>
    </reaction>
</comment>
<comment type="cofactor">
    <cofactor evidence="1">
        <name>Co(2+)</name>
        <dbReference type="ChEBI" id="CHEBI:48828"/>
    </cofactor>
    <cofactor evidence="1">
        <name>Zn(2+)</name>
        <dbReference type="ChEBI" id="CHEBI:29105"/>
    </cofactor>
    <cofactor evidence="1">
        <name>Mn(2+)</name>
        <dbReference type="ChEBI" id="CHEBI:29035"/>
    </cofactor>
    <cofactor evidence="1">
        <name>Fe(2+)</name>
        <dbReference type="ChEBI" id="CHEBI:29033"/>
    </cofactor>
    <text evidence="1">Binds 2 divalent metal cations per subunit. Has a high-affinity and a low affinity metal-binding site. The true nature of the physiological cofactor is under debate. The enzyme is active with cobalt, zinc, manganese or divalent iron ions. Most likely, methionine aminopeptidases function as mononuclear Fe(2+)-metalloproteases under physiological conditions, and the catalytically relevant metal-binding site has been assigned to the histidine-containing high-affinity site.</text>
</comment>
<comment type="subcellular location">
    <subcellularLocation>
        <location evidence="1">Cytoplasm</location>
    </subcellularLocation>
</comment>
<comment type="similarity">
    <text evidence="1">Belongs to the peptidase M24A family. Methionine aminopeptidase eukaryotic type 2 subfamily.</text>
</comment>
<name>MAP22_ASPCL</name>
<accession>A1CH02</accession>
<proteinExistence type="inferred from homology"/>
<reference key="1">
    <citation type="journal article" date="2008" name="PLoS Genet.">
        <title>Genomic islands in the pathogenic filamentous fungus Aspergillus fumigatus.</title>
        <authorList>
            <person name="Fedorova N.D."/>
            <person name="Khaldi N."/>
            <person name="Joardar V.S."/>
            <person name="Maiti R."/>
            <person name="Amedeo P."/>
            <person name="Anderson M.J."/>
            <person name="Crabtree J."/>
            <person name="Silva J.C."/>
            <person name="Badger J.H."/>
            <person name="Albarraq A."/>
            <person name="Angiuoli S."/>
            <person name="Bussey H."/>
            <person name="Bowyer P."/>
            <person name="Cotty P.J."/>
            <person name="Dyer P.S."/>
            <person name="Egan A."/>
            <person name="Galens K."/>
            <person name="Fraser-Liggett C.M."/>
            <person name="Haas B.J."/>
            <person name="Inman J.M."/>
            <person name="Kent R."/>
            <person name="Lemieux S."/>
            <person name="Malavazi I."/>
            <person name="Orvis J."/>
            <person name="Roemer T."/>
            <person name="Ronning C.M."/>
            <person name="Sundaram J.P."/>
            <person name="Sutton G."/>
            <person name="Turner G."/>
            <person name="Venter J.C."/>
            <person name="White O.R."/>
            <person name="Whitty B.R."/>
            <person name="Youngman P."/>
            <person name="Wolfe K.H."/>
            <person name="Goldman G.H."/>
            <person name="Wortman J.R."/>
            <person name="Jiang B."/>
            <person name="Denning D.W."/>
            <person name="Nierman W.C."/>
        </authorList>
    </citation>
    <scope>NUCLEOTIDE SEQUENCE [LARGE SCALE GENOMIC DNA]</scope>
    <source>
        <strain>ATCC 1007 / CBS 513.65 / DSM 816 / NCTC 3887 / NRRL 1 / QM 1276 / 107</strain>
    </source>
</reference>
<evidence type="ECO:0000255" key="1">
    <source>
        <dbReference type="HAMAP-Rule" id="MF_03175"/>
    </source>
</evidence>
<evidence type="ECO:0000256" key="2">
    <source>
        <dbReference type="SAM" id="MobiDB-lite"/>
    </source>
</evidence>
<dbReference type="EC" id="3.4.11.18" evidence="1"/>
<dbReference type="EMBL" id="DS027054">
    <property type="protein sequence ID" value="EAW10157.1"/>
    <property type="molecule type" value="Genomic_DNA"/>
</dbReference>
<dbReference type="RefSeq" id="XP_001271583.1">
    <property type="nucleotide sequence ID" value="XM_001271582.1"/>
</dbReference>
<dbReference type="SMR" id="A1CH02"/>
<dbReference type="STRING" id="344612.A1CH02"/>
<dbReference type="MEROPS" id="M24.002"/>
<dbReference type="EnsemblFungi" id="EAW10157">
    <property type="protein sequence ID" value="EAW10157"/>
    <property type="gene ID" value="ACLA_046220"/>
</dbReference>
<dbReference type="GeneID" id="4704294"/>
<dbReference type="KEGG" id="act:ACLA_046220"/>
<dbReference type="VEuPathDB" id="FungiDB:ACLA_046220"/>
<dbReference type="eggNOG" id="KOG2775">
    <property type="taxonomic scope" value="Eukaryota"/>
</dbReference>
<dbReference type="HOGENOM" id="CLU_015857_7_1_1"/>
<dbReference type="OMA" id="PFAKRWL"/>
<dbReference type="OrthoDB" id="7848262at2759"/>
<dbReference type="Proteomes" id="UP000006701">
    <property type="component" value="Unassembled WGS sequence"/>
</dbReference>
<dbReference type="GO" id="GO:0005737">
    <property type="term" value="C:cytoplasm"/>
    <property type="evidence" value="ECO:0007669"/>
    <property type="project" value="UniProtKB-SubCell"/>
</dbReference>
<dbReference type="GO" id="GO:0004239">
    <property type="term" value="F:initiator methionyl aminopeptidase activity"/>
    <property type="evidence" value="ECO:0007669"/>
    <property type="project" value="UniProtKB-UniRule"/>
</dbReference>
<dbReference type="GO" id="GO:0046872">
    <property type="term" value="F:metal ion binding"/>
    <property type="evidence" value="ECO:0007669"/>
    <property type="project" value="UniProtKB-UniRule"/>
</dbReference>
<dbReference type="GO" id="GO:0070006">
    <property type="term" value="F:metalloaminopeptidase activity"/>
    <property type="evidence" value="ECO:0007669"/>
    <property type="project" value="UniProtKB-UniRule"/>
</dbReference>
<dbReference type="GO" id="GO:0006508">
    <property type="term" value="P:proteolysis"/>
    <property type="evidence" value="ECO:0007669"/>
    <property type="project" value="UniProtKB-KW"/>
</dbReference>
<dbReference type="CDD" id="cd01088">
    <property type="entry name" value="MetAP2"/>
    <property type="match status" value="1"/>
</dbReference>
<dbReference type="FunFam" id="1.10.10.10:FF:000370">
    <property type="entry name" value="Methionine aminopeptidase 2"/>
    <property type="match status" value="1"/>
</dbReference>
<dbReference type="Gene3D" id="3.90.230.10">
    <property type="entry name" value="Creatinase/methionine aminopeptidase superfamily"/>
    <property type="match status" value="1"/>
</dbReference>
<dbReference type="Gene3D" id="1.10.10.10">
    <property type="entry name" value="Winged helix-like DNA-binding domain superfamily/Winged helix DNA-binding domain"/>
    <property type="match status" value="1"/>
</dbReference>
<dbReference type="HAMAP" id="MF_03175">
    <property type="entry name" value="MetAP_2_euk"/>
    <property type="match status" value="1"/>
</dbReference>
<dbReference type="InterPro" id="IPR036005">
    <property type="entry name" value="Creatinase/aminopeptidase-like"/>
</dbReference>
<dbReference type="InterPro" id="IPR050247">
    <property type="entry name" value="Met_Aminopeptidase_Type2"/>
</dbReference>
<dbReference type="InterPro" id="IPR000994">
    <property type="entry name" value="Pept_M24"/>
</dbReference>
<dbReference type="InterPro" id="IPR001714">
    <property type="entry name" value="Pept_M24_MAP"/>
</dbReference>
<dbReference type="InterPro" id="IPR002468">
    <property type="entry name" value="Pept_M24A_MAP2"/>
</dbReference>
<dbReference type="InterPro" id="IPR018349">
    <property type="entry name" value="Pept_M24A_MAP2_BS"/>
</dbReference>
<dbReference type="InterPro" id="IPR036388">
    <property type="entry name" value="WH-like_DNA-bd_sf"/>
</dbReference>
<dbReference type="InterPro" id="IPR036390">
    <property type="entry name" value="WH_DNA-bd_sf"/>
</dbReference>
<dbReference type="NCBIfam" id="TIGR00501">
    <property type="entry name" value="met_pdase_II"/>
    <property type="match status" value="1"/>
</dbReference>
<dbReference type="PANTHER" id="PTHR45777">
    <property type="entry name" value="METHIONINE AMINOPEPTIDASE 2"/>
    <property type="match status" value="1"/>
</dbReference>
<dbReference type="PANTHER" id="PTHR45777:SF2">
    <property type="entry name" value="METHIONINE AMINOPEPTIDASE 2"/>
    <property type="match status" value="1"/>
</dbReference>
<dbReference type="Pfam" id="PF00557">
    <property type="entry name" value="Peptidase_M24"/>
    <property type="match status" value="1"/>
</dbReference>
<dbReference type="PRINTS" id="PR00599">
    <property type="entry name" value="MAPEPTIDASE"/>
</dbReference>
<dbReference type="SUPFAM" id="SSF55920">
    <property type="entry name" value="Creatinase/aminopeptidase"/>
    <property type="match status" value="1"/>
</dbReference>
<dbReference type="SUPFAM" id="SSF46785">
    <property type="entry name" value="Winged helix' DNA-binding domain"/>
    <property type="match status" value="1"/>
</dbReference>
<dbReference type="PROSITE" id="PS01202">
    <property type="entry name" value="MAP_2"/>
    <property type="match status" value="1"/>
</dbReference>
<sequence length="435" mass="47491">MAAQTTEKLQKLDLNGQSGDAKADAPAAGQAEAGEAEEDSDDEKDDGNAAPEAGAGGAAKKKKRKSKKKKKGGAKVQSSPPRVPVSNLFPNNQYPEGEIVEYTNENSYRTTNEEKRYLDRMNNDFLQEYRQAAEVHRQVRQYAQKNIKPGQTLTEIAEGIEDAVRALTGHQGLEEGDNLKGGMGFPCGLSINHCAAHYTPNAGNKMVLQQGDVMKVDFGAQINGRIVDSAFTMTFDPVYDPLLEAVKDATNTGIREAGIDVRMSDIGAAIQEAMESYEIELNGTMYPVKCIRNLNGHNIDQHVIHGGKSVPIVKGGDQTKMEEGETFAIETFGSTGKGYVREDMETSHYALVPDAPSVPLRLSSAKNLLNVINKNFGTLPFCRRYLDRLGQDKYLLGLNNLVSSGIVQDYPPLCDIKGSYTAQFEHVQIPSHSHP</sequence>
<organism>
    <name type="scientific">Aspergillus clavatus (strain ATCC 1007 / CBS 513.65 / DSM 816 / NCTC 3887 / NRRL 1 / QM 1276 / 107)</name>
    <dbReference type="NCBI Taxonomy" id="344612"/>
    <lineage>
        <taxon>Eukaryota</taxon>
        <taxon>Fungi</taxon>
        <taxon>Dikarya</taxon>
        <taxon>Ascomycota</taxon>
        <taxon>Pezizomycotina</taxon>
        <taxon>Eurotiomycetes</taxon>
        <taxon>Eurotiomycetidae</taxon>
        <taxon>Eurotiales</taxon>
        <taxon>Aspergillaceae</taxon>
        <taxon>Aspergillus</taxon>
        <taxon>Aspergillus subgen. Fumigati</taxon>
    </lineage>
</organism>
<feature type="chain" id="PRO_0000407598" description="Methionine aminopeptidase 2-2">
    <location>
        <begin position="1"/>
        <end position="435"/>
    </location>
</feature>
<feature type="region of interest" description="Disordered" evidence="2">
    <location>
        <begin position="1"/>
        <end position="92"/>
    </location>
</feature>
<feature type="compositionally biased region" description="Low complexity" evidence="2">
    <location>
        <begin position="24"/>
        <end position="33"/>
    </location>
</feature>
<feature type="compositionally biased region" description="Acidic residues" evidence="2">
    <location>
        <begin position="34"/>
        <end position="45"/>
    </location>
</feature>
<feature type="compositionally biased region" description="Basic residues" evidence="2">
    <location>
        <begin position="59"/>
        <end position="73"/>
    </location>
</feature>
<feature type="binding site" evidence="1">
    <location>
        <position position="197"/>
    </location>
    <ligand>
        <name>substrate</name>
    </ligand>
</feature>
<feature type="binding site" evidence="1">
    <location>
        <position position="217"/>
    </location>
    <ligand>
        <name>a divalent metal cation</name>
        <dbReference type="ChEBI" id="CHEBI:60240"/>
        <label>1</label>
    </ligand>
</feature>
<feature type="binding site" evidence="1">
    <location>
        <position position="228"/>
    </location>
    <ligand>
        <name>a divalent metal cation</name>
        <dbReference type="ChEBI" id="CHEBI:60240"/>
        <label>1</label>
    </ligand>
</feature>
<feature type="binding site" evidence="1">
    <location>
        <position position="228"/>
    </location>
    <ligand>
        <name>a divalent metal cation</name>
        <dbReference type="ChEBI" id="CHEBI:60240"/>
        <label>2</label>
        <note>catalytic</note>
    </ligand>
</feature>
<feature type="binding site" evidence="1">
    <location>
        <position position="297"/>
    </location>
    <ligand>
        <name>a divalent metal cation</name>
        <dbReference type="ChEBI" id="CHEBI:60240"/>
        <label>2</label>
        <note>catalytic</note>
    </ligand>
</feature>
<feature type="binding site" evidence="1">
    <location>
        <position position="305"/>
    </location>
    <ligand>
        <name>substrate</name>
    </ligand>
</feature>
<feature type="binding site" evidence="1">
    <location>
        <position position="330"/>
    </location>
    <ligand>
        <name>a divalent metal cation</name>
        <dbReference type="ChEBI" id="CHEBI:60240"/>
        <label>2</label>
        <note>catalytic</note>
    </ligand>
</feature>
<feature type="binding site" evidence="1">
    <location>
        <position position="425"/>
    </location>
    <ligand>
        <name>a divalent metal cation</name>
        <dbReference type="ChEBI" id="CHEBI:60240"/>
        <label>1</label>
    </ligand>
</feature>
<feature type="binding site" evidence="1">
    <location>
        <position position="425"/>
    </location>
    <ligand>
        <name>a divalent metal cation</name>
        <dbReference type="ChEBI" id="CHEBI:60240"/>
        <label>2</label>
        <note>catalytic</note>
    </ligand>
</feature>
<gene>
    <name type="ORF">ACLA_046220</name>
</gene>
<keyword id="KW-0031">Aminopeptidase</keyword>
<keyword id="KW-0963">Cytoplasm</keyword>
<keyword id="KW-0378">Hydrolase</keyword>
<keyword id="KW-0479">Metal-binding</keyword>
<keyword id="KW-0645">Protease</keyword>
<keyword id="KW-1185">Reference proteome</keyword>